<protein>
    <recommendedName>
        <fullName evidence="1">Probable tRNA pseudouridine synthase D</fullName>
        <ecNumber evidence="1">5.4.99.27</ecNumber>
    </recommendedName>
    <alternativeName>
        <fullName evidence="1">tRNA pseudouridine(13) synthase</fullName>
    </alternativeName>
    <alternativeName>
        <fullName evidence="1">tRNA pseudouridylate synthase D</fullName>
    </alternativeName>
    <alternativeName>
        <fullName evidence="1">tRNA-uridine isomerase D</fullName>
    </alternativeName>
</protein>
<accession>O28596</accession>
<evidence type="ECO:0000255" key="1">
    <source>
        <dbReference type="HAMAP-Rule" id="MF_01082"/>
    </source>
</evidence>
<organism>
    <name type="scientific">Archaeoglobus fulgidus (strain ATCC 49558 / DSM 4304 / JCM 9628 / NBRC 100126 / VC-16)</name>
    <dbReference type="NCBI Taxonomy" id="224325"/>
    <lineage>
        <taxon>Archaea</taxon>
        <taxon>Methanobacteriati</taxon>
        <taxon>Methanobacteriota</taxon>
        <taxon>Archaeoglobi</taxon>
        <taxon>Archaeoglobales</taxon>
        <taxon>Archaeoglobaceae</taxon>
        <taxon>Archaeoglobus</taxon>
    </lineage>
</organism>
<keyword id="KW-0413">Isomerase</keyword>
<keyword id="KW-1185">Reference proteome</keyword>
<keyword id="KW-0819">tRNA processing</keyword>
<dbReference type="EC" id="5.4.99.27" evidence="1"/>
<dbReference type="EMBL" id="AE000782">
    <property type="protein sequence ID" value="AAB89568.1"/>
    <property type="molecule type" value="Genomic_DNA"/>
</dbReference>
<dbReference type="PIR" id="D69459">
    <property type="entry name" value="D69459"/>
</dbReference>
<dbReference type="RefSeq" id="WP_010879173.1">
    <property type="nucleotide sequence ID" value="NC_000917.1"/>
</dbReference>
<dbReference type="SMR" id="O28596"/>
<dbReference type="STRING" id="224325.AF_1677"/>
<dbReference type="PaxDb" id="224325-AF_1677"/>
<dbReference type="EnsemblBacteria" id="AAB89568">
    <property type="protein sequence ID" value="AAB89568"/>
    <property type="gene ID" value="AF_1677"/>
</dbReference>
<dbReference type="GeneID" id="24795420"/>
<dbReference type="KEGG" id="afu:AF_1677"/>
<dbReference type="eggNOG" id="arCOG04252">
    <property type="taxonomic scope" value="Archaea"/>
</dbReference>
<dbReference type="HOGENOM" id="CLU_005281_4_1_2"/>
<dbReference type="OrthoDB" id="1798at2157"/>
<dbReference type="PhylomeDB" id="O28596"/>
<dbReference type="Proteomes" id="UP000002199">
    <property type="component" value="Chromosome"/>
</dbReference>
<dbReference type="GO" id="GO:0003723">
    <property type="term" value="F:RNA binding"/>
    <property type="evidence" value="ECO:0007669"/>
    <property type="project" value="InterPro"/>
</dbReference>
<dbReference type="GO" id="GO:0160150">
    <property type="term" value="F:tRNA pseudouridine(13) synthase activity"/>
    <property type="evidence" value="ECO:0007669"/>
    <property type="project" value="UniProtKB-EC"/>
</dbReference>
<dbReference type="GO" id="GO:0031119">
    <property type="term" value="P:tRNA pseudouridine synthesis"/>
    <property type="evidence" value="ECO:0007669"/>
    <property type="project" value="UniProtKB-UniRule"/>
</dbReference>
<dbReference type="CDD" id="cd02577">
    <property type="entry name" value="PSTD1"/>
    <property type="match status" value="1"/>
</dbReference>
<dbReference type="FunFam" id="3.30.70.3160:FF:000001">
    <property type="entry name" value="Probable tRNA pseudouridine synthase D"/>
    <property type="match status" value="1"/>
</dbReference>
<dbReference type="Gene3D" id="1.10.1510.30">
    <property type="match status" value="1"/>
</dbReference>
<dbReference type="Gene3D" id="3.30.70.3160">
    <property type="match status" value="1"/>
</dbReference>
<dbReference type="Gene3D" id="3.30.2350.20">
    <property type="entry name" value="TruD, catalytic domain"/>
    <property type="match status" value="1"/>
</dbReference>
<dbReference type="HAMAP" id="MF_01082">
    <property type="entry name" value="TruD"/>
    <property type="match status" value="1"/>
</dbReference>
<dbReference type="InterPro" id="IPR020103">
    <property type="entry name" value="PsdUridine_synth_cat_dom_sf"/>
</dbReference>
<dbReference type="InterPro" id="IPR001656">
    <property type="entry name" value="PsdUridine_synth_TruD"/>
</dbReference>
<dbReference type="InterPro" id="IPR020119">
    <property type="entry name" value="PsdUridine_synth_TruD_CS"/>
</dbReference>
<dbReference type="InterPro" id="IPR011760">
    <property type="entry name" value="PsdUridine_synth_TruD_insert"/>
</dbReference>
<dbReference type="InterPro" id="IPR042214">
    <property type="entry name" value="TruD_catalytic"/>
</dbReference>
<dbReference type="NCBIfam" id="TIGR00094">
    <property type="entry name" value="tRNA_TruD_broad"/>
    <property type="match status" value="1"/>
</dbReference>
<dbReference type="PANTHER" id="PTHR13326:SF21">
    <property type="entry name" value="PSEUDOURIDYLATE SYNTHASE PUS7L"/>
    <property type="match status" value="1"/>
</dbReference>
<dbReference type="PANTHER" id="PTHR13326">
    <property type="entry name" value="TRNA PSEUDOURIDINE SYNTHASE D"/>
    <property type="match status" value="1"/>
</dbReference>
<dbReference type="Pfam" id="PF01142">
    <property type="entry name" value="TruD"/>
    <property type="match status" value="1"/>
</dbReference>
<dbReference type="PIRSF" id="PIRSF037016">
    <property type="entry name" value="Pseudouridin_synth_euk_prd"/>
    <property type="match status" value="1"/>
</dbReference>
<dbReference type="SUPFAM" id="SSF55120">
    <property type="entry name" value="Pseudouridine synthase"/>
    <property type="match status" value="1"/>
</dbReference>
<dbReference type="PROSITE" id="PS50984">
    <property type="entry name" value="TRUD"/>
    <property type="match status" value="1"/>
</dbReference>
<dbReference type="PROSITE" id="PS01268">
    <property type="entry name" value="UPF0024"/>
    <property type="match status" value="1"/>
</dbReference>
<gene>
    <name evidence="1" type="primary">truD</name>
    <name type="ordered locus">AF_1677</name>
</gene>
<sequence>MEEKVGIECYITSTPGMGGEIKAEPEDFYVEEIAEFNLSDEGDFLIIRVEKKNWDTLNFARVLSNALGISQKRISFAGTKDKRALTVQYFSIYGVKKEEIERVNLKDAKIEVIGYARRAIQLGDLLGNFFRIRVYGCRDGEIFQETRNELMEKGTPNFFGLQRFGSIRFITHEVGKLILQNNYEEAFWVYVAKPFEGENEEVRKIREILWETRDAKLGLRELPKYLRYERNLLQKLREGKSEEEALLSLPKNLKMMFVHAYQSYIFNRLLSERIRQFGSLKTLEEGDFACYLTFKTRPTFSDCSEVEVNEARVRFLVKERVASLALPLVGYDTKLKGWSRIALDFLSEDNLDLSSFKTKHKEFSSSGSYRPADTLIEHTGLSFTDSTFSFYLPRGCYATVFLREFLKTELS</sequence>
<proteinExistence type="inferred from homology"/>
<name>TRUD_ARCFU</name>
<feature type="chain" id="PRO_0000152536" description="Probable tRNA pseudouridine synthase D">
    <location>
        <begin position="1"/>
        <end position="411"/>
    </location>
</feature>
<feature type="domain" description="TRUD" evidence="1">
    <location>
        <begin position="154"/>
        <end position="375"/>
    </location>
</feature>
<feature type="active site" description="Nucleophile" evidence="1">
    <location>
        <position position="81"/>
    </location>
</feature>
<reference key="1">
    <citation type="journal article" date="1997" name="Nature">
        <title>The complete genome sequence of the hyperthermophilic, sulphate-reducing archaeon Archaeoglobus fulgidus.</title>
        <authorList>
            <person name="Klenk H.-P."/>
            <person name="Clayton R.A."/>
            <person name="Tomb J.-F."/>
            <person name="White O."/>
            <person name="Nelson K.E."/>
            <person name="Ketchum K.A."/>
            <person name="Dodson R.J."/>
            <person name="Gwinn M.L."/>
            <person name="Hickey E.K."/>
            <person name="Peterson J.D."/>
            <person name="Richardson D.L."/>
            <person name="Kerlavage A.R."/>
            <person name="Graham D.E."/>
            <person name="Kyrpides N.C."/>
            <person name="Fleischmann R.D."/>
            <person name="Quackenbush J."/>
            <person name="Lee N.H."/>
            <person name="Sutton G.G."/>
            <person name="Gill S.R."/>
            <person name="Kirkness E.F."/>
            <person name="Dougherty B.A."/>
            <person name="McKenney K."/>
            <person name="Adams M.D."/>
            <person name="Loftus B.J."/>
            <person name="Peterson S.N."/>
            <person name="Reich C.I."/>
            <person name="McNeil L.K."/>
            <person name="Badger J.H."/>
            <person name="Glodek A."/>
            <person name="Zhou L."/>
            <person name="Overbeek R."/>
            <person name="Gocayne J.D."/>
            <person name="Weidman J.F."/>
            <person name="McDonald L.A."/>
            <person name="Utterback T.R."/>
            <person name="Cotton M.D."/>
            <person name="Spriggs T."/>
            <person name="Artiach P."/>
            <person name="Kaine B.P."/>
            <person name="Sykes S.M."/>
            <person name="Sadow P.W."/>
            <person name="D'Andrea K.P."/>
            <person name="Bowman C."/>
            <person name="Fujii C."/>
            <person name="Garland S.A."/>
            <person name="Mason T.M."/>
            <person name="Olsen G.J."/>
            <person name="Fraser C.M."/>
            <person name="Smith H.O."/>
            <person name="Woese C.R."/>
            <person name="Venter J.C."/>
        </authorList>
    </citation>
    <scope>NUCLEOTIDE SEQUENCE [LARGE SCALE GENOMIC DNA]</scope>
    <source>
        <strain>ATCC 49558 / DSM 4304 / JCM 9628 / NBRC 100126 / VC-16</strain>
    </source>
</reference>
<comment type="function">
    <text evidence="1">Could be responsible for synthesis of pseudouridine from uracil-13 in transfer RNAs.</text>
</comment>
<comment type="catalytic activity">
    <reaction evidence="1">
        <text>uridine(13) in tRNA = pseudouridine(13) in tRNA</text>
        <dbReference type="Rhea" id="RHEA:42540"/>
        <dbReference type="Rhea" id="RHEA-COMP:10105"/>
        <dbReference type="Rhea" id="RHEA-COMP:10106"/>
        <dbReference type="ChEBI" id="CHEBI:65314"/>
        <dbReference type="ChEBI" id="CHEBI:65315"/>
        <dbReference type="EC" id="5.4.99.27"/>
    </reaction>
</comment>
<comment type="similarity">
    <text evidence="1">Belongs to the pseudouridine synthase TruD family.</text>
</comment>